<dbReference type="EC" id="1.14.18.-"/>
<dbReference type="EMBL" id="AF064803">
    <property type="protein sequence ID" value="AAC17168.1"/>
    <property type="molecule type" value="mRNA"/>
</dbReference>
<dbReference type="PIR" id="I51282">
    <property type="entry name" value="I51282"/>
</dbReference>
<dbReference type="SMR" id="P55027"/>
<dbReference type="GlyCosmos" id="P55027">
    <property type="glycosylation" value="7 sites, No reported glycans"/>
</dbReference>
<dbReference type="UniPathway" id="UPA00785"/>
<dbReference type="GO" id="GO:0042470">
    <property type="term" value="C:melanosome"/>
    <property type="evidence" value="ECO:0000250"/>
    <property type="project" value="UniProtKB"/>
</dbReference>
<dbReference type="GO" id="GO:0033162">
    <property type="term" value="C:melanosome membrane"/>
    <property type="evidence" value="ECO:0000250"/>
    <property type="project" value="UniProtKB"/>
</dbReference>
<dbReference type="GO" id="GO:0046872">
    <property type="term" value="F:metal ion binding"/>
    <property type="evidence" value="ECO:0007669"/>
    <property type="project" value="UniProtKB-KW"/>
</dbReference>
<dbReference type="GO" id="GO:0004497">
    <property type="term" value="F:monooxygenase activity"/>
    <property type="evidence" value="ECO:0007669"/>
    <property type="project" value="UniProtKB-KW"/>
</dbReference>
<dbReference type="GO" id="GO:0042438">
    <property type="term" value="P:melanin biosynthetic process"/>
    <property type="evidence" value="ECO:0007669"/>
    <property type="project" value="UniProtKB-UniPathway"/>
</dbReference>
<dbReference type="GO" id="GO:0030318">
    <property type="term" value="P:melanocyte differentiation"/>
    <property type="evidence" value="ECO:0007669"/>
    <property type="project" value="TreeGrafter"/>
</dbReference>
<dbReference type="GO" id="GO:0032438">
    <property type="term" value="P:melanosome organization"/>
    <property type="evidence" value="ECO:0007669"/>
    <property type="project" value="TreeGrafter"/>
</dbReference>
<dbReference type="FunFam" id="1.10.1280.10:FF:000001">
    <property type="entry name" value="5,6-dihydroxyindole-2-carboxylic acid oxidase"/>
    <property type="match status" value="1"/>
</dbReference>
<dbReference type="Gene3D" id="1.10.1280.10">
    <property type="entry name" value="Di-copper center containing domain from catechol oxidase"/>
    <property type="match status" value="1"/>
</dbReference>
<dbReference type="InterPro" id="IPR008922">
    <property type="entry name" value="Di-copper_centre_dom_sf"/>
</dbReference>
<dbReference type="InterPro" id="IPR002049">
    <property type="entry name" value="LE_dom"/>
</dbReference>
<dbReference type="InterPro" id="IPR050316">
    <property type="entry name" value="Tyrosinase/Hemocyanin"/>
</dbReference>
<dbReference type="InterPro" id="IPR002227">
    <property type="entry name" value="Tyrosinase_Cu-bd"/>
</dbReference>
<dbReference type="PANTHER" id="PTHR11474:SF3">
    <property type="entry name" value="5,6-DIHYDROXYINDOLE-2-CARBOXYLIC ACID OXIDASE"/>
    <property type="match status" value="1"/>
</dbReference>
<dbReference type="PANTHER" id="PTHR11474">
    <property type="entry name" value="TYROSINASE FAMILY MEMBER"/>
    <property type="match status" value="1"/>
</dbReference>
<dbReference type="Pfam" id="PF00053">
    <property type="entry name" value="EGF_laminin"/>
    <property type="match status" value="1"/>
</dbReference>
<dbReference type="Pfam" id="PF00264">
    <property type="entry name" value="Tyrosinase"/>
    <property type="match status" value="1"/>
</dbReference>
<dbReference type="PRINTS" id="PR00092">
    <property type="entry name" value="TYROSINASE"/>
</dbReference>
<dbReference type="SUPFAM" id="SSF48056">
    <property type="entry name" value="Di-copper centre-containing domain"/>
    <property type="match status" value="1"/>
</dbReference>
<dbReference type="PROSITE" id="PS00497">
    <property type="entry name" value="TYROSINASE_1"/>
    <property type="match status" value="1"/>
</dbReference>
<dbReference type="PROSITE" id="PS00498">
    <property type="entry name" value="TYROSINASE_2"/>
    <property type="match status" value="1"/>
</dbReference>
<protein>
    <recommendedName>
        <fullName>5,6-dihydroxyindole-2-carboxylic acid oxidase</fullName>
        <shortName>DHICA oxidase</shortName>
        <ecNumber>1.14.18.-</ecNumber>
    </recommendedName>
    <alternativeName>
        <fullName>Tyrosinase-related protein 1</fullName>
        <shortName>TRP-1</shortName>
        <shortName>TRP1</shortName>
    </alternativeName>
</protein>
<comment type="function">
    <text evidence="1">Plays a role in melanin biosynthesis. Catalyzes the oxidation of 5,6-dihydroxyindole-2-carboxylic acid (DHICA) into indole-5,6-quinone-2-carboxylic acid. May regulate or influence the type of melanin synthesized. Also to a lower extent, capable of hydroxylating tyrosine and producing melanin.</text>
</comment>
<comment type="catalytic activity">
    <reaction evidence="2">
        <text>2 5,6-dihydroxyindole-2-carboxylate + O2 = 2 indole-5,6-quinone-2-carboxylate + 2 H2O</text>
        <dbReference type="Rhea" id="RHEA:68388"/>
        <dbReference type="ChEBI" id="CHEBI:15377"/>
        <dbReference type="ChEBI" id="CHEBI:15379"/>
        <dbReference type="ChEBI" id="CHEBI:16875"/>
        <dbReference type="ChEBI" id="CHEBI:177869"/>
    </reaction>
    <physiologicalReaction direction="left-to-right" evidence="2">
        <dbReference type="Rhea" id="RHEA:68389"/>
    </physiologicalReaction>
</comment>
<comment type="cofactor">
    <cofactor evidence="2">
        <name>Cu(2+)</name>
        <dbReference type="ChEBI" id="CHEBI:29036"/>
    </cofactor>
    <cofactor evidence="2">
        <name>Zn(2+)</name>
        <dbReference type="ChEBI" id="CHEBI:29105"/>
    </cofactor>
    <text evidence="2">Contains bound zinc ions after heterologous expression in insect cells.</text>
</comment>
<comment type="pathway">
    <text evidence="2">Pigment biosynthesis; melanin biosynthesis.</text>
</comment>
<comment type="subcellular location">
    <subcellularLocation>
        <location evidence="1">Melanosome membrane</location>
        <topology evidence="1">Single-pass type I membrane protein</topology>
    </subcellularLocation>
    <text evidence="1">Located to mature stage III and IV melanosomes and apposed endosomal tubular membranes. Transported to pigmented melanosomes by the BLOC-1 complex. Proper trafficking to melanosome is regulated by SGSM2, ANKRD27, RAB9A, RAB32 and RAB38.</text>
</comment>
<comment type="similarity">
    <text evidence="4">Belongs to the tyrosinase family.</text>
</comment>
<comment type="caution">
    <text evidence="1 2 4">The precise function of this protein in melanin biosynthesis is still under debate. DHICA oxidase activity is controversial. The mouse protein has been shown to have DHICA oxidase activity (By similarity). In contrast, the human protein was shown lack DHICA oxidase activity, or to have DHICA oxidase activity only in the presence of Cu(2+), but not with Zn(2+) (By similarity).</text>
</comment>
<sequence>MLGPATFLPLTAALLLLIPGGRAQFPRQCVTPEALRSGQCCPGLFPALTPDPADRCGASVGRGRCAPLQVDARPHGPQYPHDGVDDREQWPTRFFNNSCLCAENFSGYDCGSCKPGWVGVNCNQRVLAVRRNILDLTAQERRRFIAALDLAKRTTHPHYVIASRRYAEIMGPDGNSTQFENVSIYNFFVWTHYYSIGKTFLGAGRESFGGIDFSHEGPAFVTWHRYHLLQLERDMQEMLQDPTFALPYWNFAIGGNECDICTDDFMGARSNFDSILLSSNSVFSQWRVLCESLEGYDTLGTICNSTEGGPIRRNPGGNVARPMVQRLPEPQDVALCLEVGLFDTPPFYSNSSESFRNTVEGYSEPSGKYDPSVRSLHNLAHLFLNGTGGQTHVSPNDPIFVLLHTFTDAVFDEWLRRHNADISLYPLENAPIGHNRQYNMVPFWPPVSNNEMFVTAPESLGYSYEVQWPSRALNFTEIITIAVVAALVLVAVIFAAASCAVHRSRKDDVHQPLLGEQYPRYSEEYERDASQSAV</sequence>
<organism>
    <name type="scientific">Ambystoma mexicanum</name>
    <name type="common">Axolotl</name>
    <dbReference type="NCBI Taxonomy" id="8296"/>
    <lineage>
        <taxon>Eukaryota</taxon>
        <taxon>Metazoa</taxon>
        <taxon>Chordata</taxon>
        <taxon>Craniata</taxon>
        <taxon>Vertebrata</taxon>
        <taxon>Euteleostomi</taxon>
        <taxon>Amphibia</taxon>
        <taxon>Batrachia</taxon>
        <taxon>Caudata</taxon>
        <taxon>Salamandroidea</taxon>
        <taxon>Ambystomatidae</taxon>
        <taxon>Ambystoma</taxon>
    </lineage>
</organism>
<reference key="1">
    <citation type="submission" date="1998-05" db="EMBL/GenBank/DDBJ databases">
        <title>Complete cDNA for Ambystoma mexicanum TRP-1.</title>
        <authorList>
            <person name="Mason K.A."/>
            <person name="Moody M."/>
            <person name="Amack J."/>
            <person name="Thibaudeau G."/>
        </authorList>
    </citation>
    <scope>NUCLEOTIDE SEQUENCE [MRNA]</scope>
</reference>
<reference key="2">
    <citation type="journal article" date="1995" name="Pigment Cell Res.">
        <title>The identification and partial cloning by PCR of the gene for tyrosinase-related protein-1 in the Mexican axolotl.</title>
        <authorList>
            <person name="Mason K.A."/>
            <person name="Mason S.K."/>
        </authorList>
    </citation>
    <scope>NUCLEOTIDE SEQUENCE [MRNA] OF 85-436</scope>
</reference>
<feature type="signal peptide" evidence="3">
    <location>
        <begin position="1"/>
        <end position="23"/>
    </location>
</feature>
<feature type="chain" id="PRO_0000035886" description="5,6-dihydroxyindole-2-carboxylic acid oxidase">
    <location>
        <begin position="24"/>
        <end position="534"/>
    </location>
</feature>
<feature type="topological domain" description="Lumenal, melanosome" evidence="3">
    <location>
        <begin position="24"/>
        <end position="477"/>
    </location>
</feature>
<feature type="transmembrane region" description="Helical" evidence="3">
    <location>
        <begin position="478"/>
        <end position="501"/>
    </location>
</feature>
<feature type="topological domain" description="Cytoplasmic" evidence="3">
    <location>
        <begin position="502"/>
        <end position="534"/>
    </location>
</feature>
<feature type="binding site" evidence="2">
    <location>
        <position position="192"/>
    </location>
    <ligand>
        <name>Zn(2+)</name>
        <dbReference type="ChEBI" id="CHEBI:29105"/>
        <label>A</label>
    </ligand>
</feature>
<feature type="binding site" evidence="2">
    <location>
        <position position="215"/>
    </location>
    <ligand>
        <name>Zn(2+)</name>
        <dbReference type="ChEBI" id="CHEBI:29105"/>
        <label>A</label>
    </ligand>
</feature>
<feature type="binding site" evidence="2">
    <location>
        <position position="224"/>
    </location>
    <ligand>
        <name>Zn(2+)</name>
        <dbReference type="ChEBI" id="CHEBI:29105"/>
        <label>A</label>
    </ligand>
</feature>
<feature type="binding site" evidence="2">
    <location>
        <position position="377"/>
    </location>
    <ligand>
        <name>Zn(2+)</name>
        <dbReference type="ChEBI" id="CHEBI:29105"/>
        <label>B</label>
    </ligand>
</feature>
<feature type="binding site" evidence="2">
    <location>
        <position position="381"/>
    </location>
    <ligand>
        <name>Zn(2+)</name>
        <dbReference type="ChEBI" id="CHEBI:29105"/>
        <label>B</label>
    </ligand>
</feature>
<feature type="binding site" evidence="2">
    <location>
        <position position="404"/>
    </location>
    <ligand>
        <name>Zn(2+)</name>
        <dbReference type="ChEBI" id="CHEBI:29105"/>
        <label>B</label>
    </ligand>
</feature>
<feature type="glycosylation site" description="N-linked (GlcNAc...) asparagine" evidence="3">
    <location>
        <position position="96"/>
    </location>
</feature>
<feature type="glycosylation site" description="N-linked (GlcNAc...) asparagine" evidence="3">
    <location>
        <position position="104"/>
    </location>
</feature>
<feature type="glycosylation site" description="N-linked (GlcNAc...) asparagine" evidence="3">
    <location>
        <position position="175"/>
    </location>
</feature>
<feature type="glycosylation site" description="N-linked (GlcNAc...) asparagine" evidence="3">
    <location>
        <position position="181"/>
    </location>
</feature>
<feature type="glycosylation site" description="N-linked (GlcNAc...) asparagine" evidence="3">
    <location>
        <position position="304"/>
    </location>
</feature>
<feature type="glycosylation site" description="N-linked (GlcNAc...) asparagine" evidence="3">
    <location>
        <position position="350"/>
    </location>
</feature>
<feature type="glycosylation site" description="N-linked (GlcNAc...) asparagine" evidence="3">
    <location>
        <position position="385"/>
    </location>
</feature>
<feature type="disulfide bond" evidence="2">
    <location>
        <begin position="29"/>
        <end position="40"/>
    </location>
</feature>
<feature type="disulfide bond" evidence="2">
    <location>
        <begin position="41"/>
        <end position="65"/>
    </location>
</feature>
<feature type="disulfide bond" evidence="2">
    <location>
        <begin position="56"/>
        <end position="99"/>
    </location>
</feature>
<feature type="disulfide bond" evidence="2">
    <location>
        <begin position="101"/>
        <end position="110"/>
    </location>
</feature>
<feature type="disulfide bond" evidence="2">
    <location>
        <begin position="113"/>
        <end position="122"/>
    </location>
</feature>
<feature type="disulfide bond" evidence="2">
    <location>
        <begin position="258"/>
        <end position="261"/>
    </location>
</feature>
<feature type="disulfide bond" evidence="2">
    <location>
        <begin position="290"/>
        <end position="303"/>
    </location>
</feature>
<keyword id="KW-0186">Copper</keyword>
<keyword id="KW-1015">Disulfide bond</keyword>
<keyword id="KW-0325">Glycoprotein</keyword>
<keyword id="KW-0470">Melanin biosynthesis</keyword>
<keyword id="KW-0472">Membrane</keyword>
<keyword id="KW-0479">Metal-binding</keyword>
<keyword id="KW-0503">Monooxygenase</keyword>
<keyword id="KW-0560">Oxidoreductase</keyword>
<keyword id="KW-0732">Signal</keyword>
<keyword id="KW-0812">Transmembrane</keyword>
<keyword id="KW-1133">Transmembrane helix</keyword>
<keyword id="KW-0862">Zinc</keyword>
<gene>
    <name type="primary">TYRP1</name>
</gene>
<proteinExistence type="evidence at transcript level"/>
<accession>P55027</accession>
<name>TYRP1_AMBME</name>
<evidence type="ECO:0000250" key="1">
    <source>
        <dbReference type="UniProtKB" id="P07147"/>
    </source>
</evidence>
<evidence type="ECO:0000250" key="2">
    <source>
        <dbReference type="UniProtKB" id="P17643"/>
    </source>
</evidence>
<evidence type="ECO:0000255" key="3"/>
<evidence type="ECO:0000305" key="4"/>